<accession>Q87NC0</accession>
<organism>
    <name type="scientific">Vibrio parahaemolyticus serotype O3:K6 (strain RIMD 2210633)</name>
    <dbReference type="NCBI Taxonomy" id="223926"/>
    <lineage>
        <taxon>Bacteria</taxon>
        <taxon>Pseudomonadati</taxon>
        <taxon>Pseudomonadota</taxon>
        <taxon>Gammaproteobacteria</taxon>
        <taxon>Vibrionales</taxon>
        <taxon>Vibrionaceae</taxon>
        <taxon>Vibrio</taxon>
    </lineage>
</organism>
<comment type="similarity">
    <text evidence="1">Belongs to the elongation factor P family.</text>
</comment>
<gene>
    <name type="ordered locus">VP1948</name>
</gene>
<evidence type="ECO:0000255" key="1">
    <source>
        <dbReference type="HAMAP-Rule" id="MF_00646"/>
    </source>
</evidence>
<feature type="chain" id="PRO_0000094390" description="Elongation factor P-like protein">
    <location>
        <begin position="1"/>
        <end position="188"/>
    </location>
</feature>
<reference key="1">
    <citation type="journal article" date="2003" name="Lancet">
        <title>Genome sequence of Vibrio parahaemolyticus: a pathogenic mechanism distinct from that of V. cholerae.</title>
        <authorList>
            <person name="Makino K."/>
            <person name="Oshima K."/>
            <person name="Kurokawa K."/>
            <person name="Yokoyama K."/>
            <person name="Uda T."/>
            <person name="Tagomori K."/>
            <person name="Iijima Y."/>
            <person name="Najima M."/>
            <person name="Nakano M."/>
            <person name="Yamashita A."/>
            <person name="Kubota Y."/>
            <person name="Kimura S."/>
            <person name="Yasunaga T."/>
            <person name="Honda T."/>
            <person name="Shinagawa H."/>
            <person name="Hattori M."/>
            <person name="Iida T."/>
        </authorList>
    </citation>
    <scope>NUCLEOTIDE SEQUENCE [LARGE SCALE GENOMIC DNA]</scope>
    <source>
        <strain>RIMD 2210633</strain>
    </source>
</reference>
<proteinExistence type="inferred from homology"/>
<sequence>MPKASEIKKGFAIESNGKTLLVKDIEVTTPGGRGGAKIYKMRCTDLTTGARVDERYKSDDVVETVEMNKRAVVYSYADGDEHIFMDNEDYSQYTFKHNEVEDDMLFINEDTQGIHIILVDGSAVGLELPSSVELVIEETDPSIKGASASARTKPARFASGLVVQVPEYIATGDRVVINTAERKYMSRA</sequence>
<protein>
    <recommendedName>
        <fullName evidence="1">Elongation factor P-like protein</fullName>
    </recommendedName>
</protein>
<dbReference type="EMBL" id="BA000031">
    <property type="protein sequence ID" value="BAC60211.1"/>
    <property type="molecule type" value="Genomic_DNA"/>
</dbReference>
<dbReference type="RefSeq" id="NP_798327.1">
    <property type="nucleotide sequence ID" value="NC_004603.1"/>
</dbReference>
<dbReference type="SMR" id="Q87NC0"/>
<dbReference type="GeneID" id="1189459"/>
<dbReference type="KEGG" id="vpa:VP1948"/>
<dbReference type="PATRIC" id="fig|223926.6.peg.1864"/>
<dbReference type="eggNOG" id="COG0231">
    <property type="taxonomic scope" value="Bacteria"/>
</dbReference>
<dbReference type="HOGENOM" id="CLU_074944_2_0_6"/>
<dbReference type="Proteomes" id="UP000002493">
    <property type="component" value="Chromosome 1"/>
</dbReference>
<dbReference type="GO" id="GO:0005737">
    <property type="term" value="C:cytoplasm"/>
    <property type="evidence" value="ECO:0007669"/>
    <property type="project" value="InterPro"/>
</dbReference>
<dbReference type="GO" id="GO:0003746">
    <property type="term" value="F:translation elongation factor activity"/>
    <property type="evidence" value="ECO:0007669"/>
    <property type="project" value="UniProtKB-UniRule"/>
</dbReference>
<dbReference type="GO" id="GO:0043043">
    <property type="term" value="P:peptide biosynthetic process"/>
    <property type="evidence" value="ECO:0007669"/>
    <property type="project" value="InterPro"/>
</dbReference>
<dbReference type="CDD" id="cd04470">
    <property type="entry name" value="S1_EF-P_repeat_1"/>
    <property type="match status" value="1"/>
</dbReference>
<dbReference type="CDD" id="cd05794">
    <property type="entry name" value="S1_EF-P_repeat_2"/>
    <property type="match status" value="1"/>
</dbReference>
<dbReference type="FunFam" id="2.40.50.140:FF:000004">
    <property type="entry name" value="Elongation factor P"/>
    <property type="match status" value="1"/>
</dbReference>
<dbReference type="FunFam" id="2.30.30.30:FF:000011">
    <property type="entry name" value="Elongation factor P-like protein"/>
    <property type="match status" value="1"/>
</dbReference>
<dbReference type="Gene3D" id="2.30.30.30">
    <property type="match status" value="1"/>
</dbReference>
<dbReference type="Gene3D" id="2.40.50.140">
    <property type="entry name" value="Nucleic acid-binding proteins"/>
    <property type="match status" value="2"/>
</dbReference>
<dbReference type="HAMAP" id="MF_00646">
    <property type="entry name" value="EFP"/>
    <property type="match status" value="1"/>
</dbReference>
<dbReference type="InterPro" id="IPR015365">
    <property type="entry name" value="Elong-fact-P_C"/>
</dbReference>
<dbReference type="InterPro" id="IPR012340">
    <property type="entry name" value="NA-bd_OB-fold"/>
</dbReference>
<dbReference type="InterPro" id="IPR014722">
    <property type="entry name" value="Rib_uL2_dom2"/>
</dbReference>
<dbReference type="InterPro" id="IPR020599">
    <property type="entry name" value="Transl_elong_fac_P/YeiP"/>
</dbReference>
<dbReference type="InterPro" id="IPR013185">
    <property type="entry name" value="Transl_elong_KOW-like"/>
</dbReference>
<dbReference type="InterPro" id="IPR011897">
    <property type="entry name" value="Transl_elong_p-like_YeiP"/>
</dbReference>
<dbReference type="InterPro" id="IPR001059">
    <property type="entry name" value="Transl_elong_P/YeiP_cen"/>
</dbReference>
<dbReference type="InterPro" id="IPR013852">
    <property type="entry name" value="Transl_elong_P/YeiP_CS"/>
</dbReference>
<dbReference type="InterPro" id="IPR008991">
    <property type="entry name" value="Translation_prot_SH3-like_sf"/>
</dbReference>
<dbReference type="NCBIfam" id="NF001810">
    <property type="entry name" value="PRK00529.1"/>
    <property type="match status" value="1"/>
</dbReference>
<dbReference type="NCBIfam" id="NF003392">
    <property type="entry name" value="PRK04542.1"/>
    <property type="match status" value="1"/>
</dbReference>
<dbReference type="NCBIfam" id="TIGR02178">
    <property type="entry name" value="yeiP"/>
    <property type="match status" value="1"/>
</dbReference>
<dbReference type="PANTHER" id="PTHR30053">
    <property type="entry name" value="ELONGATION FACTOR P"/>
    <property type="match status" value="1"/>
</dbReference>
<dbReference type="PANTHER" id="PTHR30053:SF14">
    <property type="entry name" value="TRANSLATION ELONGATION FACTOR KOW-LIKE DOMAIN-CONTAINING PROTEIN"/>
    <property type="match status" value="1"/>
</dbReference>
<dbReference type="Pfam" id="PF01132">
    <property type="entry name" value="EFP"/>
    <property type="match status" value="1"/>
</dbReference>
<dbReference type="Pfam" id="PF08207">
    <property type="entry name" value="EFP_N"/>
    <property type="match status" value="1"/>
</dbReference>
<dbReference type="Pfam" id="PF09285">
    <property type="entry name" value="Elong-fact-P_C"/>
    <property type="match status" value="1"/>
</dbReference>
<dbReference type="PIRSF" id="PIRSF005901">
    <property type="entry name" value="EF-P"/>
    <property type="match status" value="1"/>
</dbReference>
<dbReference type="SMART" id="SM01185">
    <property type="entry name" value="EFP"/>
    <property type="match status" value="1"/>
</dbReference>
<dbReference type="SMART" id="SM00841">
    <property type="entry name" value="Elong-fact-P_C"/>
    <property type="match status" value="1"/>
</dbReference>
<dbReference type="SUPFAM" id="SSF50249">
    <property type="entry name" value="Nucleic acid-binding proteins"/>
    <property type="match status" value="2"/>
</dbReference>
<dbReference type="SUPFAM" id="SSF50104">
    <property type="entry name" value="Translation proteins SH3-like domain"/>
    <property type="match status" value="1"/>
</dbReference>
<dbReference type="PROSITE" id="PS01275">
    <property type="entry name" value="EFP"/>
    <property type="match status" value="1"/>
</dbReference>
<name>EFPL_VIBPA</name>